<feature type="chain" id="PRO_0000160188" description="Glucosamine-6-phosphate deaminase">
    <location>
        <begin position="1"/>
        <end position="266"/>
    </location>
</feature>
<feature type="active site" description="Proton acceptor; for enolization step" evidence="1">
    <location>
        <position position="72"/>
    </location>
</feature>
<feature type="active site" description="For ring-opening step" evidence="1">
    <location>
        <position position="141"/>
    </location>
</feature>
<feature type="active site" description="Proton acceptor; for ring-opening step" evidence="1">
    <location>
        <position position="143"/>
    </location>
</feature>
<feature type="active site" description="For ring-opening step" evidence="1">
    <location>
        <position position="148"/>
    </location>
</feature>
<feature type="site" description="Part of the allosteric site" evidence="1">
    <location>
        <position position="151"/>
    </location>
</feature>
<feature type="site" description="Part of the allosteric site" evidence="1">
    <location>
        <position position="158"/>
    </location>
</feature>
<feature type="site" description="Part of the allosteric site" evidence="1">
    <location>
        <position position="160"/>
    </location>
</feature>
<feature type="site" description="Part of the allosteric site" evidence="1">
    <location>
        <position position="161"/>
    </location>
</feature>
<feature type="site" description="Part of the allosteric site" evidence="1">
    <location>
        <position position="254"/>
    </location>
</feature>
<feature type="sequence conflict" description="In Ref. 3; AAS61333." evidence="2" ref="3">
    <original>K</original>
    <variation>N</variation>
    <location>
        <position position="234"/>
    </location>
</feature>
<sequence>MRLIPLRNTAEVGKWAARHIVNRINAFKPTAERPFILGLPTGGTPMEAYKYLIAMHKAGEVSFKHVVTFNMDEYVGLPKEHPESYYTFMHTNFFDHVDIPAENINLLNGNAADIDAECRRYEEKIKSYGKIHLFMGGVGVDGHIAFNEPASSLASRTRIKTLTQETRIANSRFFGGDANLVPKYALTVGVGTLLDAEEVMILVTGHGKAQALQAAVEGSINHMWTISCLQLHAKAIMVCDEPSTMELKVKTVKYFRELEAENVKDL</sequence>
<evidence type="ECO:0000255" key="1">
    <source>
        <dbReference type="HAMAP-Rule" id="MF_01241"/>
    </source>
</evidence>
<evidence type="ECO:0000305" key="2"/>
<name>NAGB_YERPE</name>
<keyword id="KW-0021">Allosteric enzyme</keyword>
<keyword id="KW-0119">Carbohydrate metabolism</keyword>
<keyword id="KW-0378">Hydrolase</keyword>
<keyword id="KW-1185">Reference proteome</keyword>
<reference key="1">
    <citation type="journal article" date="2001" name="Nature">
        <title>Genome sequence of Yersinia pestis, the causative agent of plague.</title>
        <authorList>
            <person name="Parkhill J."/>
            <person name="Wren B.W."/>
            <person name="Thomson N.R."/>
            <person name="Titball R.W."/>
            <person name="Holden M.T.G."/>
            <person name="Prentice M.B."/>
            <person name="Sebaihia M."/>
            <person name="James K.D."/>
            <person name="Churcher C.M."/>
            <person name="Mungall K.L."/>
            <person name="Baker S."/>
            <person name="Basham D."/>
            <person name="Bentley S.D."/>
            <person name="Brooks K."/>
            <person name="Cerdeno-Tarraga A.-M."/>
            <person name="Chillingworth T."/>
            <person name="Cronin A."/>
            <person name="Davies R.M."/>
            <person name="Davis P."/>
            <person name="Dougan G."/>
            <person name="Feltwell T."/>
            <person name="Hamlin N."/>
            <person name="Holroyd S."/>
            <person name="Jagels K."/>
            <person name="Karlyshev A.V."/>
            <person name="Leather S."/>
            <person name="Moule S."/>
            <person name="Oyston P.C.F."/>
            <person name="Quail M.A."/>
            <person name="Rutherford K.M."/>
            <person name="Simmonds M."/>
            <person name="Skelton J."/>
            <person name="Stevens K."/>
            <person name="Whitehead S."/>
            <person name="Barrell B.G."/>
        </authorList>
    </citation>
    <scope>NUCLEOTIDE SEQUENCE [LARGE SCALE GENOMIC DNA]</scope>
    <source>
        <strain>CO-92 / Biovar Orientalis</strain>
    </source>
</reference>
<reference key="2">
    <citation type="journal article" date="2002" name="J. Bacteriol.">
        <title>Genome sequence of Yersinia pestis KIM.</title>
        <authorList>
            <person name="Deng W."/>
            <person name="Burland V."/>
            <person name="Plunkett G. III"/>
            <person name="Boutin A."/>
            <person name="Mayhew G.F."/>
            <person name="Liss P."/>
            <person name="Perna N.T."/>
            <person name="Rose D.J."/>
            <person name="Mau B."/>
            <person name="Zhou S."/>
            <person name="Schwartz D.C."/>
            <person name="Fetherston J.D."/>
            <person name="Lindler L.E."/>
            <person name="Brubaker R.R."/>
            <person name="Plano G.V."/>
            <person name="Straley S.C."/>
            <person name="McDonough K.A."/>
            <person name="Nilles M.L."/>
            <person name="Matson J.S."/>
            <person name="Blattner F.R."/>
            <person name="Perry R.D."/>
        </authorList>
    </citation>
    <scope>NUCLEOTIDE SEQUENCE [LARGE SCALE GENOMIC DNA]</scope>
    <source>
        <strain>KIM10+ / Biovar Mediaevalis</strain>
    </source>
</reference>
<reference key="3">
    <citation type="journal article" date="2004" name="DNA Res.">
        <title>Complete genome sequence of Yersinia pestis strain 91001, an isolate avirulent to humans.</title>
        <authorList>
            <person name="Song Y."/>
            <person name="Tong Z."/>
            <person name="Wang J."/>
            <person name="Wang L."/>
            <person name="Guo Z."/>
            <person name="Han Y."/>
            <person name="Zhang J."/>
            <person name="Pei D."/>
            <person name="Zhou D."/>
            <person name="Qin H."/>
            <person name="Pang X."/>
            <person name="Han Y."/>
            <person name="Zhai J."/>
            <person name="Li M."/>
            <person name="Cui B."/>
            <person name="Qi Z."/>
            <person name="Jin L."/>
            <person name="Dai R."/>
            <person name="Chen F."/>
            <person name="Li S."/>
            <person name="Ye C."/>
            <person name="Du Z."/>
            <person name="Lin W."/>
            <person name="Wang J."/>
            <person name="Yu J."/>
            <person name="Yang H."/>
            <person name="Wang J."/>
            <person name="Huang P."/>
            <person name="Yang R."/>
        </authorList>
    </citation>
    <scope>NUCLEOTIDE SEQUENCE [LARGE SCALE GENOMIC DNA]</scope>
    <source>
        <strain>91001 / Biovar Mediaevalis</strain>
    </source>
</reference>
<comment type="function">
    <text evidence="1">Catalyzes the reversible isomerization-deamination of glucosamine 6-phosphate (GlcN6P) to form fructose 6-phosphate (Fru6P) and ammonium ion.</text>
</comment>
<comment type="catalytic activity">
    <reaction evidence="1">
        <text>alpha-D-glucosamine 6-phosphate + H2O = beta-D-fructose 6-phosphate + NH4(+)</text>
        <dbReference type="Rhea" id="RHEA:12172"/>
        <dbReference type="ChEBI" id="CHEBI:15377"/>
        <dbReference type="ChEBI" id="CHEBI:28938"/>
        <dbReference type="ChEBI" id="CHEBI:57634"/>
        <dbReference type="ChEBI" id="CHEBI:75989"/>
        <dbReference type="EC" id="3.5.99.6"/>
    </reaction>
</comment>
<comment type="activity regulation">
    <text evidence="1">Allosterically activated by N-acetylglucosamine 6-phosphate (GlcNAc6P).</text>
</comment>
<comment type="pathway">
    <text evidence="1">Amino-sugar metabolism; N-acetylneuraminate degradation; D-fructose 6-phosphate from N-acetylneuraminate: step 5/5.</text>
</comment>
<comment type="subunit">
    <text evidence="1">Homohexamer.</text>
</comment>
<comment type="similarity">
    <text evidence="1">Belongs to the glucosamine/galactosamine-6-phosphate isomerase family. NagB subfamily.</text>
</comment>
<dbReference type="EC" id="3.5.99.6" evidence="1"/>
<dbReference type="EMBL" id="AL590842">
    <property type="protein sequence ID" value="CAL21250.1"/>
    <property type="molecule type" value="Genomic_DNA"/>
</dbReference>
<dbReference type="EMBL" id="AE009952">
    <property type="protein sequence ID" value="AAM84779.1"/>
    <property type="molecule type" value="Genomic_DNA"/>
</dbReference>
<dbReference type="EMBL" id="AE017042">
    <property type="protein sequence ID" value="AAS61333.1"/>
    <property type="molecule type" value="Genomic_DNA"/>
</dbReference>
<dbReference type="PIR" id="AG0320">
    <property type="entry name" value="AG0320"/>
</dbReference>
<dbReference type="RefSeq" id="WP_002210352.1">
    <property type="nucleotide sequence ID" value="NZ_WUCM01000011.1"/>
</dbReference>
<dbReference type="RefSeq" id="YP_002347583.1">
    <property type="nucleotide sequence ID" value="NC_003143.1"/>
</dbReference>
<dbReference type="SMR" id="Q8ZDE1"/>
<dbReference type="STRING" id="214092.YPO2627"/>
<dbReference type="PaxDb" id="214092-YPO2627"/>
<dbReference type="DNASU" id="1146149"/>
<dbReference type="EnsemblBacteria" id="AAS61333">
    <property type="protein sequence ID" value="AAS61333"/>
    <property type="gene ID" value="YP_1086"/>
</dbReference>
<dbReference type="GeneID" id="57976064"/>
<dbReference type="KEGG" id="ype:YPO2627"/>
<dbReference type="KEGG" id="ypk:y1202"/>
<dbReference type="KEGG" id="ypm:YP_1086"/>
<dbReference type="PATRIC" id="fig|214092.21.peg.3058"/>
<dbReference type="eggNOG" id="COG0363">
    <property type="taxonomic scope" value="Bacteria"/>
</dbReference>
<dbReference type="HOGENOM" id="CLU_049611_0_1_6"/>
<dbReference type="OMA" id="HVITQGI"/>
<dbReference type="OrthoDB" id="9791139at2"/>
<dbReference type="UniPathway" id="UPA00629">
    <property type="reaction ID" value="UER00684"/>
</dbReference>
<dbReference type="Proteomes" id="UP000000815">
    <property type="component" value="Chromosome"/>
</dbReference>
<dbReference type="Proteomes" id="UP000001019">
    <property type="component" value="Chromosome"/>
</dbReference>
<dbReference type="Proteomes" id="UP000002490">
    <property type="component" value="Chromosome"/>
</dbReference>
<dbReference type="GO" id="GO:0005737">
    <property type="term" value="C:cytoplasm"/>
    <property type="evidence" value="ECO:0000318"/>
    <property type="project" value="GO_Central"/>
</dbReference>
<dbReference type="GO" id="GO:0004342">
    <property type="term" value="F:glucosamine-6-phosphate deaminase activity"/>
    <property type="evidence" value="ECO:0000318"/>
    <property type="project" value="GO_Central"/>
</dbReference>
<dbReference type="GO" id="GO:0042802">
    <property type="term" value="F:identical protein binding"/>
    <property type="evidence" value="ECO:0000318"/>
    <property type="project" value="GO_Central"/>
</dbReference>
<dbReference type="GO" id="GO:0005975">
    <property type="term" value="P:carbohydrate metabolic process"/>
    <property type="evidence" value="ECO:0007669"/>
    <property type="project" value="InterPro"/>
</dbReference>
<dbReference type="GO" id="GO:0006043">
    <property type="term" value="P:glucosamine catabolic process"/>
    <property type="evidence" value="ECO:0000318"/>
    <property type="project" value="GO_Central"/>
</dbReference>
<dbReference type="GO" id="GO:0006046">
    <property type="term" value="P:N-acetylglucosamine catabolic process"/>
    <property type="evidence" value="ECO:0000318"/>
    <property type="project" value="GO_Central"/>
</dbReference>
<dbReference type="GO" id="GO:0019262">
    <property type="term" value="P:N-acetylneuraminate catabolic process"/>
    <property type="evidence" value="ECO:0000318"/>
    <property type="project" value="GO_Central"/>
</dbReference>
<dbReference type="CDD" id="cd01399">
    <property type="entry name" value="GlcN6P_deaminase"/>
    <property type="match status" value="1"/>
</dbReference>
<dbReference type="FunFam" id="3.40.50.1360:FF:000002">
    <property type="entry name" value="Glucosamine-6-phosphate deaminase"/>
    <property type="match status" value="1"/>
</dbReference>
<dbReference type="Gene3D" id="3.40.50.1360">
    <property type="match status" value="1"/>
</dbReference>
<dbReference type="HAMAP" id="MF_01241">
    <property type="entry name" value="GlcN6P_deamin"/>
    <property type="match status" value="1"/>
</dbReference>
<dbReference type="InterPro" id="IPR006148">
    <property type="entry name" value="Glc/Gal-6P_isomerase"/>
</dbReference>
<dbReference type="InterPro" id="IPR004547">
    <property type="entry name" value="Glucosamine6P_isomerase"/>
</dbReference>
<dbReference type="InterPro" id="IPR018321">
    <property type="entry name" value="Glucosamine6P_isomerase_CS"/>
</dbReference>
<dbReference type="InterPro" id="IPR037171">
    <property type="entry name" value="NagB/RpiA_transferase-like"/>
</dbReference>
<dbReference type="NCBIfam" id="TIGR00502">
    <property type="entry name" value="nagB"/>
    <property type="match status" value="1"/>
</dbReference>
<dbReference type="NCBIfam" id="NF001685">
    <property type="entry name" value="PRK00443.1-5"/>
    <property type="match status" value="1"/>
</dbReference>
<dbReference type="PANTHER" id="PTHR11280">
    <property type="entry name" value="GLUCOSAMINE-6-PHOSPHATE ISOMERASE"/>
    <property type="match status" value="1"/>
</dbReference>
<dbReference type="PANTHER" id="PTHR11280:SF5">
    <property type="entry name" value="GLUCOSAMINE-6-PHOSPHATE ISOMERASE"/>
    <property type="match status" value="1"/>
</dbReference>
<dbReference type="Pfam" id="PF01182">
    <property type="entry name" value="Glucosamine_iso"/>
    <property type="match status" value="1"/>
</dbReference>
<dbReference type="SUPFAM" id="SSF100950">
    <property type="entry name" value="NagB/RpiA/CoA transferase-like"/>
    <property type="match status" value="1"/>
</dbReference>
<dbReference type="PROSITE" id="PS01161">
    <property type="entry name" value="GLC_GALNAC_ISOMERASE"/>
    <property type="match status" value="1"/>
</dbReference>
<accession>Q8ZDE1</accession>
<accession>Q0WDQ5</accession>
<gene>
    <name evidence="1" type="primary">nagB</name>
    <name type="ordered locus">YPO2627</name>
    <name type="ordered locus">y1202</name>
    <name type="ordered locus">YP_1086</name>
</gene>
<protein>
    <recommendedName>
        <fullName evidence="1">Glucosamine-6-phosphate deaminase</fullName>
        <ecNumber evidence="1">3.5.99.6</ecNumber>
    </recommendedName>
    <alternativeName>
        <fullName evidence="1">GlcN6P deaminase</fullName>
        <shortName evidence="1">GNPDA</shortName>
    </alternativeName>
    <alternativeName>
        <fullName evidence="1">Glucosamine-6-phosphate isomerase</fullName>
    </alternativeName>
</protein>
<proteinExistence type="inferred from homology"/>
<organism>
    <name type="scientific">Yersinia pestis</name>
    <dbReference type="NCBI Taxonomy" id="632"/>
    <lineage>
        <taxon>Bacteria</taxon>
        <taxon>Pseudomonadati</taxon>
        <taxon>Pseudomonadota</taxon>
        <taxon>Gammaproteobacteria</taxon>
        <taxon>Enterobacterales</taxon>
        <taxon>Yersiniaceae</taxon>
        <taxon>Yersinia</taxon>
    </lineage>
</organism>